<proteinExistence type="inferred from homology"/>
<organism>
    <name type="scientific">Xanthomonas oryzae pv. oryzae (strain MAFF 311018)</name>
    <dbReference type="NCBI Taxonomy" id="342109"/>
    <lineage>
        <taxon>Bacteria</taxon>
        <taxon>Pseudomonadati</taxon>
        <taxon>Pseudomonadota</taxon>
        <taxon>Gammaproteobacteria</taxon>
        <taxon>Lysobacterales</taxon>
        <taxon>Lysobacteraceae</taxon>
        <taxon>Xanthomonas</taxon>
    </lineage>
</organism>
<comment type="function">
    <text evidence="1">Attaches a formyl group to the free amino group of methionyl-tRNA(fMet). The formyl group appears to play a dual role in the initiator identity of N-formylmethionyl-tRNA by promoting its recognition by IF2 and preventing the misappropriation of this tRNA by the elongation apparatus.</text>
</comment>
<comment type="catalytic activity">
    <reaction evidence="1">
        <text>L-methionyl-tRNA(fMet) + (6R)-10-formyltetrahydrofolate = N-formyl-L-methionyl-tRNA(fMet) + (6S)-5,6,7,8-tetrahydrofolate + H(+)</text>
        <dbReference type="Rhea" id="RHEA:24380"/>
        <dbReference type="Rhea" id="RHEA-COMP:9952"/>
        <dbReference type="Rhea" id="RHEA-COMP:9953"/>
        <dbReference type="ChEBI" id="CHEBI:15378"/>
        <dbReference type="ChEBI" id="CHEBI:57453"/>
        <dbReference type="ChEBI" id="CHEBI:78530"/>
        <dbReference type="ChEBI" id="CHEBI:78844"/>
        <dbReference type="ChEBI" id="CHEBI:195366"/>
        <dbReference type="EC" id="2.1.2.9"/>
    </reaction>
</comment>
<comment type="similarity">
    <text evidence="1">Belongs to the Fmt family.</text>
</comment>
<accession>Q2P825</accession>
<name>FMT_XANOM</name>
<gene>
    <name evidence="1" type="primary">fmt</name>
    <name type="ordered locus">XOO0547</name>
</gene>
<evidence type="ECO:0000255" key="1">
    <source>
        <dbReference type="HAMAP-Rule" id="MF_00182"/>
    </source>
</evidence>
<dbReference type="EC" id="2.1.2.9" evidence="1"/>
<dbReference type="EMBL" id="AP008229">
    <property type="protein sequence ID" value="BAE67302.1"/>
    <property type="molecule type" value="Genomic_DNA"/>
</dbReference>
<dbReference type="RefSeq" id="WP_011257494.1">
    <property type="nucleotide sequence ID" value="NC_007705.1"/>
</dbReference>
<dbReference type="SMR" id="Q2P825"/>
<dbReference type="KEGG" id="xom:XOO0547"/>
<dbReference type="HOGENOM" id="CLU_033347_1_2_6"/>
<dbReference type="GO" id="GO:0005829">
    <property type="term" value="C:cytosol"/>
    <property type="evidence" value="ECO:0007669"/>
    <property type="project" value="TreeGrafter"/>
</dbReference>
<dbReference type="GO" id="GO:0004479">
    <property type="term" value="F:methionyl-tRNA formyltransferase activity"/>
    <property type="evidence" value="ECO:0007669"/>
    <property type="project" value="UniProtKB-UniRule"/>
</dbReference>
<dbReference type="CDD" id="cd08646">
    <property type="entry name" value="FMT_core_Met-tRNA-FMT_N"/>
    <property type="match status" value="1"/>
</dbReference>
<dbReference type="CDD" id="cd08704">
    <property type="entry name" value="Met_tRNA_FMT_C"/>
    <property type="match status" value="1"/>
</dbReference>
<dbReference type="Gene3D" id="3.10.25.10">
    <property type="entry name" value="Formyl transferase, C-terminal domain"/>
    <property type="match status" value="1"/>
</dbReference>
<dbReference type="Gene3D" id="3.40.50.170">
    <property type="entry name" value="Formyl transferase, N-terminal domain"/>
    <property type="match status" value="1"/>
</dbReference>
<dbReference type="HAMAP" id="MF_00182">
    <property type="entry name" value="Formyl_trans"/>
    <property type="match status" value="1"/>
</dbReference>
<dbReference type="InterPro" id="IPR005794">
    <property type="entry name" value="Fmt"/>
</dbReference>
<dbReference type="InterPro" id="IPR005793">
    <property type="entry name" value="Formyl_trans_C"/>
</dbReference>
<dbReference type="InterPro" id="IPR037022">
    <property type="entry name" value="Formyl_trans_C_sf"/>
</dbReference>
<dbReference type="InterPro" id="IPR002376">
    <property type="entry name" value="Formyl_transf_N"/>
</dbReference>
<dbReference type="InterPro" id="IPR036477">
    <property type="entry name" value="Formyl_transf_N_sf"/>
</dbReference>
<dbReference type="InterPro" id="IPR011034">
    <property type="entry name" value="Formyl_transferase-like_C_sf"/>
</dbReference>
<dbReference type="InterPro" id="IPR001555">
    <property type="entry name" value="GART_AS"/>
</dbReference>
<dbReference type="InterPro" id="IPR044135">
    <property type="entry name" value="Met-tRNA-FMT_C"/>
</dbReference>
<dbReference type="InterPro" id="IPR041711">
    <property type="entry name" value="Met-tRNA-FMT_N"/>
</dbReference>
<dbReference type="NCBIfam" id="TIGR00460">
    <property type="entry name" value="fmt"/>
    <property type="match status" value="1"/>
</dbReference>
<dbReference type="PANTHER" id="PTHR11138">
    <property type="entry name" value="METHIONYL-TRNA FORMYLTRANSFERASE"/>
    <property type="match status" value="1"/>
</dbReference>
<dbReference type="PANTHER" id="PTHR11138:SF5">
    <property type="entry name" value="METHIONYL-TRNA FORMYLTRANSFERASE, MITOCHONDRIAL"/>
    <property type="match status" value="1"/>
</dbReference>
<dbReference type="Pfam" id="PF02911">
    <property type="entry name" value="Formyl_trans_C"/>
    <property type="match status" value="1"/>
</dbReference>
<dbReference type="Pfam" id="PF00551">
    <property type="entry name" value="Formyl_trans_N"/>
    <property type="match status" value="1"/>
</dbReference>
<dbReference type="SUPFAM" id="SSF50486">
    <property type="entry name" value="FMT C-terminal domain-like"/>
    <property type="match status" value="1"/>
</dbReference>
<dbReference type="SUPFAM" id="SSF53328">
    <property type="entry name" value="Formyltransferase"/>
    <property type="match status" value="1"/>
</dbReference>
<dbReference type="PROSITE" id="PS00373">
    <property type="entry name" value="GART"/>
    <property type="match status" value="1"/>
</dbReference>
<sequence>MRIIFAGTPDFAVASLRAAAQRHEVVAVYTQPDRPAGRGRGLTPSPVKIEAIARGIAVFQPQTLRSPEALATLRSLNADLMVVVAYGLILPNAVLAVPTHGCWNVHASLLPRWRGAAPIQRAIEAGDTETGVCLMQMEAGLDIGPVLLSQRIEIGEQETGGQLHDRLAALGAQVLSDGLGLLRAGIRPVAQPQPAEGVTYAHKLDKAQARLDWAQPAQELARRVRAFNPWPVAEAILAGERVRLHGAVALELAHQQPPGSLLAASKQGIDIACGQGALRVRVLQREGGKAITAADYLNARRDLLALR</sequence>
<reference key="1">
    <citation type="journal article" date="2005" name="Jpn. Agric. Res. Q.">
        <title>Genome sequence of Xanthomonas oryzae pv. oryzae suggests contribution of large numbers of effector genes and insertion sequences to its race diversity.</title>
        <authorList>
            <person name="Ochiai H."/>
            <person name="Inoue Y."/>
            <person name="Takeya M."/>
            <person name="Sasaki A."/>
            <person name="Kaku H."/>
        </authorList>
    </citation>
    <scope>NUCLEOTIDE SEQUENCE [LARGE SCALE GENOMIC DNA]</scope>
    <source>
        <strain>MAFF 311018</strain>
    </source>
</reference>
<feature type="chain" id="PRO_1000020205" description="Methionyl-tRNA formyltransferase">
    <location>
        <begin position="1"/>
        <end position="307"/>
    </location>
</feature>
<feature type="binding site" evidence="1">
    <location>
        <begin position="108"/>
        <end position="111"/>
    </location>
    <ligand>
        <name>(6S)-5,6,7,8-tetrahydrofolate</name>
        <dbReference type="ChEBI" id="CHEBI:57453"/>
    </ligand>
</feature>
<keyword id="KW-0648">Protein biosynthesis</keyword>
<keyword id="KW-0808">Transferase</keyword>
<protein>
    <recommendedName>
        <fullName evidence="1">Methionyl-tRNA formyltransferase</fullName>
        <ecNumber evidence="1">2.1.2.9</ecNumber>
    </recommendedName>
</protein>